<evidence type="ECO:0000250" key="1"/>
<evidence type="ECO:0000250" key="2">
    <source>
        <dbReference type="UniProtKB" id="Q19187"/>
    </source>
</evidence>
<evidence type="ECO:0000255" key="3"/>
<evidence type="ECO:0000255" key="4">
    <source>
        <dbReference type="PROSITE-ProRule" id="PRU00099"/>
    </source>
</evidence>
<evidence type="ECO:0000269" key="5">
    <source>
    </source>
</evidence>
<evidence type="ECO:0000269" key="6">
    <source>
    </source>
</evidence>
<reference key="1">
    <citation type="journal article" date="2004" name="Nature">
        <title>Oxygen sensation and social feeding mediated by a C. elegans guanylate cyclase homologue.</title>
        <authorList>
            <person name="Gray J.M."/>
            <person name="Karow D.S."/>
            <person name="Lu H."/>
            <person name="Chang A.J."/>
            <person name="Chang J.S."/>
            <person name="Ellis R.E."/>
            <person name="Marletta M.A."/>
            <person name="Bargmann C.I."/>
        </authorList>
    </citation>
    <scope>NUCLEOTIDE SEQUENCE [MRNA]</scope>
    <scope>TISSUE SPECIFICITY</scope>
</reference>
<reference key="2">
    <citation type="journal article" date="1998" name="Science">
        <title>Genome sequence of the nematode C. elegans: a platform for investigating biology.</title>
        <authorList>
            <consortium name="The C. elegans sequencing consortium"/>
        </authorList>
    </citation>
    <scope>NUCLEOTIDE SEQUENCE [LARGE SCALE GENOMIC DNA]</scope>
    <source>
        <strain>Bristol N2</strain>
    </source>
</reference>
<reference key="3">
    <citation type="journal article" date="2013" name="PLoS Genet.">
        <title>The C. elegans cGMP-dependent protein kinase EGL-4 regulates nociceptive behavioral sensitivity.</title>
        <authorList>
            <person name="Krzyzanowski M.C."/>
            <person name="Brueggemann C."/>
            <person name="Ezak M.J."/>
            <person name="Wood J.F."/>
            <person name="Michaels K.L."/>
            <person name="Jackson C.A."/>
            <person name="Juang B.T."/>
            <person name="Collins K.D."/>
            <person name="Yu M.C."/>
            <person name="L'etoile N.D."/>
            <person name="Ferkey D.M."/>
        </authorList>
    </citation>
    <scope>FUNCTION</scope>
</reference>
<name>GCY34_CAEEL</name>
<organism>
    <name type="scientific">Caenorhabditis elegans</name>
    <dbReference type="NCBI Taxonomy" id="6239"/>
    <lineage>
        <taxon>Eukaryota</taxon>
        <taxon>Metazoa</taxon>
        <taxon>Ecdysozoa</taxon>
        <taxon>Nematoda</taxon>
        <taxon>Chromadorea</taxon>
        <taxon>Rhabditida</taxon>
        <taxon>Rhabditina</taxon>
        <taxon>Rhabditomorpha</taxon>
        <taxon>Rhabditoidea</taxon>
        <taxon>Rhabditidae</taxon>
        <taxon>Peloderinae</taxon>
        <taxon>Caenorhabditis</taxon>
    </lineage>
</organism>
<accession>P92006</accession>
<keyword id="KW-0141">cGMP biosynthesis</keyword>
<keyword id="KW-0175">Coiled coil</keyword>
<keyword id="KW-0963">Cytoplasm</keyword>
<keyword id="KW-0342">GTP-binding</keyword>
<keyword id="KW-0349">Heme</keyword>
<keyword id="KW-0408">Iron</keyword>
<keyword id="KW-0456">Lyase</keyword>
<keyword id="KW-0460">Magnesium</keyword>
<keyword id="KW-0479">Metal-binding</keyword>
<keyword id="KW-0547">Nucleotide-binding</keyword>
<keyword id="KW-1185">Reference proteome</keyword>
<sequence>MFGFIHESIRQLVIRKYGEDVWLQVLERSGFENGKENIVNHYYSDTDTYVLVDSVSIVLKVTKDQIWEMYGGFLITYSMEIGWDELVRSMSPNLKGFLDNLDSLHYFIDHVVYKANLRGPSFRCEENPDGTLMLHYFTGRPGLYHIVKGVVKEVAKLVFNLDISLVVQGRTQRSVHMNNGERVEEHVIFLIKNVEEPRRDSDTSTTSALTSVEPDFGEIIDDNLKVSLQDFSRALPYHFVLDESCRLVQCGDELYNHIPNELLQPGTPILRIFEINRPQIPLDFENICNFINAVFVLQVKTSPLRKKHMNAMTKEEREQEVEAMEEEVESNELTQGCHLKLKGQMMMLSTKKHIIYLCSPYVTSINELMQFGMRLTAMPLHDATRDLILLNQQRLSDVEVNLQLEANNEQLETMTHELEVERQKTDSILKDMLPRKIAKQLLSGEHLEPCEYEATVMFCDLPAFQQIIPVCQPKNIVKLLNEVFFKLDRIVVLRGVYKVETVSDSYMTVSGIPDYTSEHAENMCHVALGMMWEARSVMDPVNKTPFLLRIGLHSGTIIAGVVGTKMPRYCLFGETVTLASQMESLGVAGKIQCSSWTYSKAMETGRFEFSPRGRINVKGRGDVETYFLMRSLKKSIWEITDHERDVNVNSIEGYEELEIFIENAQTVKHDGHPKANQNHSATCTIA</sequence>
<dbReference type="EC" id="4.6.1.2"/>
<dbReference type="EMBL" id="AY652943">
    <property type="protein sequence ID" value="AAT73710.1"/>
    <property type="molecule type" value="mRNA"/>
</dbReference>
<dbReference type="EMBL" id="Z81103">
    <property type="protein sequence ID" value="CAB03210.1"/>
    <property type="molecule type" value="Genomic_DNA"/>
</dbReference>
<dbReference type="PIR" id="T23721">
    <property type="entry name" value="T23721"/>
</dbReference>
<dbReference type="RefSeq" id="NP_506319.1">
    <property type="nucleotide sequence ID" value="NM_073918.6"/>
</dbReference>
<dbReference type="SMR" id="P92006"/>
<dbReference type="FunCoup" id="P92006">
    <property type="interactions" value="76"/>
</dbReference>
<dbReference type="STRING" id="6239.M04G12.3.1"/>
<dbReference type="PaxDb" id="6239-M04G12.3"/>
<dbReference type="EnsemblMetazoa" id="M04G12.3.1">
    <property type="protein sequence ID" value="M04G12.3.1"/>
    <property type="gene ID" value="WBGene00001554"/>
</dbReference>
<dbReference type="GeneID" id="191656"/>
<dbReference type="KEGG" id="cel:CELE_M04G12.3"/>
<dbReference type="UCSC" id="M04G12.3">
    <property type="organism name" value="c. elegans"/>
</dbReference>
<dbReference type="AGR" id="WB:WBGene00001554"/>
<dbReference type="CTD" id="191656"/>
<dbReference type="WormBase" id="M04G12.3">
    <property type="protein sequence ID" value="CE12426"/>
    <property type="gene ID" value="WBGene00001554"/>
    <property type="gene designation" value="gcy-34"/>
</dbReference>
<dbReference type="eggNOG" id="KOG4171">
    <property type="taxonomic scope" value="Eukaryota"/>
</dbReference>
<dbReference type="GeneTree" id="ENSGT00970000196348"/>
<dbReference type="HOGENOM" id="CLU_011614_4_0_1"/>
<dbReference type="InParanoid" id="P92006"/>
<dbReference type="OMA" id="DESXQMI"/>
<dbReference type="OrthoDB" id="6127067at2759"/>
<dbReference type="PhylomeDB" id="P92006"/>
<dbReference type="PRO" id="PR:P92006"/>
<dbReference type="Proteomes" id="UP000001940">
    <property type="component" value="Chromosome V"/>
</dbReference>
<dbReference type="Bgee" id="WBGene00001554">
    <property type="expression patterns" value="Expressed in pharyngeal muscle cell (C elegans) and 2 other cell types or tissues"/>
</dbReference>
<dbReference type="GO" id="GO:0008074">
    <property type="term" value="C:guanylate cyclase complex, soluble"/>
    <property type="evidence" value="ECO:0000318"/>
    <property type="project" value="GO_Central"/>
</dbReference>
<dbReference type="GO" id="GO:0005525">
    <property type="term" value="F:GTP binding"/>
    <property type="evidence" value="ECO:0007669"/>
    <property type="project" value="UniProtKB-KW"/>
</dbReference>
<dbReference type="GO" id="GO:0004383">
    <property type="term" value="F:guanylate cyclase activity"/>
    <property type="evidence" value="ECO:0000318"/>
    <property type="project" value="GO_Central"/>
</dbReference>
<dbReference type="GO" id="GO:0020037">
    <property type="term" value="F:heme binding"/>
    <property type="evidence" value="ECO:0007669"/>
    <property type="project" value="InterPro"/>
</dbReference>
<dbReference type="GO" id="GO:0046872">
    <property type="term" value="F:metal ion binding"/>
    <property type="evidence" value="ECO:0007669"/>
    <property type="project" value="UniProtKB-KW"/>
</dbReference>
<dbReference type="GO" id="GO:0019934">
    <property type="term" value="P:cGMP-mediated signaling"/>
    <property type="evidence" value="ECO:0000318"/>
    <property type="project" value="GO_Central"/>
</dbReference>
<dbReference type="GO" id="GO:0007635">
    <property type="term" value="P:chemosensory behavior"/>
    <property type="evidence" value="ECO:0000315"/>
    <property type="project" value="UniProtKB"/>
</dbReference>
<dbReference type="GO" id="GO:0070482">
    <property type="term" value="P:response to oxygen levels"/>
    <property type="evidence" value="ECO:0000318"/>
    <property type="project" value="GO_Central"/>
</dbReference>
<dbReference type="GO" id="GO:0050913">
    <property type="term" value="P:sensory perception of bitter taste"/>
    <property type="evidence" value="ECO:0000315"/>
    <property type="project" value="UniProtKB"/>
</dbReference>
<dbReference type="CDD" id="cd07302">
    <property type="entry name" value="CHD"/>
    <property type="match status" value="1"/>
</dbReference>
<dbReference type="FunFam" id="3.30.70.1230:FF:000007">
    <property type="entry name" value="Guanylate cyclase soluble subunit alpha-3"/>
    <property type="match status" value="1"/>
</dbReference>
<dbReference type="FunFam" id="3.30.450.260:FF:000003">
    <property type="entry name" value="Soluble guanylate cyclase gcy-32"/>
    <property type="match status" value="1"/>
</dbReference>
<dbReference type="FunFam" id="3.90.1520.10:FF:000005">
    <property type="entry name" value="Soluble guanylate cyclase gcy-36"/>
    <property type="match status" value="1"/>
</dbReference>
<dbReference type="Gene3D" id="6.10.250.780">
    <property type="match status" value="1"/>
</dbReference>
<dbReference type="Gene3D" id="3.90.1520.10">
    <property type="entry name" value="H-NOX domain"/>
    <property type="match status" value="1"/>
</dbReference>
<dbReference type="Gene3D" id="3.30.450.260">
    <property type="entry name" value="Haem NO binding associated domain"/>
    <property type="match status" value="1"/>
</dbReference>
<dbReference type="Gene3D" id="3.30.70.1230">
    <property type="entry name" value="Nucleotide cyclase"/>
    <property type="match status" value="1"/>
</dbReference>
<dbReference type="InterPro" id="IPR001054">
    <property type="entry name" value="A/G_cyclase"/>
</dbReference>
<dbReference type="InterPro" id="IPR018297">
    <property type="entry name" value="A/G_cyclase_CS"/>
</dbReference>
<dbReference type="InterPro" id="IPR038158">
    <property type="entry name" value="H-NOX_domain_sf"/>
</dbReference>
<dbReference type="InterPro" id="IPR011644">
    <property type="entry name" value="Heme_NO-bd"/>
</dbReference>
<dbReference type="InterPro" id="IPR011645">
    <property type="entry name" value="HNOB_dom_associated"/>
</dbReference>
<dbReference type="InterPro" id="IPR042463">
    <property type="entry name" value="HNOB_dom_associated_sf"/>
</dbReference>
<dbReference type="InterPro" id="IPR024096">
    <property type="entry name" value="NO_sig/Golgi_transp_ligand-bd"/>
</dbReference>
<dbReference type="InterPro" id="IPR029787">
    <property type="entry name" value="Nucleotide_cyclase"/>
</dbReference>
<dbReference type="PANTHER" id="PTHR45655">
    <property type="entry name" value="GUANYLATE CYCLASE SOLUBLE SUBUNIT BETA-2"/>
    <property type="match status" value="1"/>
</dbReference>
<dbReference type="PANTHER" id="PTHR45655:SF12">
    <property type="entry name" value="SOLUBLE GUANYLATE CYCLASE GCY-34"/>
    <property type="match status" value="1"/>
</dbReference>
<dbReference type="Pfam" id="PF00211">
    <property type="entry name" value="Guanylate_cyc"/>
    <property type="match status" value="1"/>
</dbReference>
<dbReference type="Pfam" id="PF07700">
    <property type="entry name" value="HNOB"/>
    <property type="match status" value="1"/>
</dbReference>
<dbReference type="Pfam" id="PF07701">
    <property type="entry name" value="HNOBA"/>
    <property type="match status" value="1"/>
</dbReference>
<dbReference type="SMART" id="SM00044">
    <property type="entry name" value="CYCc"/>
    <property type="match status" value="1"/>
</dbReference>
<dbReference type="SUPFAM" id="SSF111126">
    <property type="entry name" value="Ligand-binding domain in the NO signalling and Golgi transport"/>
    <property type="match status" value="1"/>
</dbReference>
<dbReference type="SUPFAM" id="SSF55073">
    <property type="entry name" value="Nucleotide cyclase"/>
    <property type="match status" value="1"/>
</dbReference>
<dbReference type="PROSITE" id="PS00452">
    <property type="entry name" value="GUANYLATE_CYCLASE_1"/>
    <property type="match status" value="1"/>
</dbReference>
<dbReference type="PROSITE" id="PS50125">
    <property type="entry name" value="GUANYLATE_CYCLASE_2"/>
    <property type="match status" value="1"/>
</dbReference>
<gene>
    <name type="primary">gcy-34</name>
    <name type="ORF">M04G12.3</name>
</gene>
<proteinExistence type="evidence at transcript level"/>
<feature type="chain" id="PRO_0000074125" description="Soluble guanylate cyclase gcy-34">
    <location>
        <begin position="1"/>
        <end position="686"/>
    </location>
</feature>
<feature type="domain" description="Guanylate cyclase" evidence="4">
    <location>
        <begin position="455"/>
        <end position="583"/>
    </location>
</feature>
<feature type="coiled-coil region" evidence="3">
    <location>
        <begin position="306"/>
        <end position="335"/>
    </location>
</feature>
<feature type="coiled-coil region" evidence="3">
    <location>
        <begin position="398"/>
        <end position="432"/>
    </location>
</feature>
<feature type="binding site" description="proximal binding residue" evidence="1">
    <location>
        <position position="105"/>
    </location>
    <ligand>
        <name>heme</name>
        <dbReference type="ChEBI" id="CHEBI:30413"/>
    </ligand>
    <ligandPart>
        <name>Fe</name>
        <dbReference type="ChEBI" id="CHEBI:18248"/>
    </ligandPart>
</feature>
<feature type="binding site" evidence="1">
    <location>
        <position position="460"/>
    </location>
    <ligand>
        <name>Mg(2+)</name>
        <dbReference type="ChEBI" id="CHEBI:18420"/>
    </ligand>
</feature>
<feature type="binding site" evidence="1">
    <location>
        <position position="504"/>
    </location>
    <ligand>
        <name>Mg(2+)</name>
        <dbReference type="ChEBI" id="CHEBI:18420"/>
    </ligand>
</feature>
<protein>
    <recommendedName>
        <fullName>Soluble guanylate cyclase gcy-34</fullName>
        <ecNumber>4.6.1.2</ecNumber>
    </recommendedName>
</protein>
<comment type="function">
    <text evidence="2 6">Synthesizes cyclic GMP (cGMP) from GTP (By similarity). May be involved in sensitivity to quinine by regulating egl-4 activity through the production of cGMP (PubMed:23874221).</text>
</comment>
<comment type="catalytic activity">
    <reaction>
        <text>GTP = 3',5'-cyclic GMP + diphosphate</text>
        <dbReference type="Rhea" id="RHEA:13665"/>
        <dbReference type="ChEBI" id="CHEBI:33019"/>
        <dbReference type="ChEBI" id="CHEBI:37565"/>
        <dbReference type="ChEBI" id="CHEBI:57746"/>
        <dbReference type="EC" id="4.6.1.2"/>
    </reaction>
</comment>
<comment type="cofactor">
    <cofactor evidence="1">
        <name>heme</name>
        <dbReference type="ChEBI" id="CHEBI:30413"/>
    </cofactor>
    <text evidence="1">Binds 1 or 2 heme groups per heterodimer.</text>
</comment>
<comment type="activity regulation">
    <text evidence="1">May be regulated by molecular oxygen. Probably not activated by nitric oxide (NO) (By similarity).</text>
</comment>
<comment type="subunit">
    <text evidence="1">Heterodimer; with other soluble guanylate cyclases.</text>
</comment>
<comment type="subcellular location">
    <subcellularLocation>
        <location evidence="1">Cytoplasm</location>
    </subcellularLocation>
</comment>
<comment type="tissue specificity">
    <text evidence="5">Expressed in a small number of neurons, corresponding to URX, AQR and PQR neurons.</text>
</comment>
<comment type="miscellaneous">
    <text>There are two types of guanylate cyclases: soluble forms and membrane-associated receptor forms.</text>
</comment>
<comment type="similarity">
    <text evidence="4">Belongs to the adenylyl cyclase class-4/guanylyl cyclase family.</text>
</comment>